<accession>Q07J67</accession>
<gene>
    <name evidence="1" type="primary">rpsU</name>
    <name type="ordered locus">RPE_4091</name>
</gene>
<feature type="chain" id="PRO_1000005161" description="Small ribosomal subunit protein bS21">
    <location>
        <begin position="1"/>
        <end position="99"/>
    </location>
</feature>
<feature type="region of interest" description="Disordered" evidence="2">
    <location>
        <begin position="60"/>
        <end position="99"/>
    </location>
</feature>
<name>RS21_RHOP5</name>
<sequence>MQVLVRDNNVDQALKALKKKMQREGIFREMKLRGHYEKPSEKKAREKAEAVRRARKLARKKLQREGLLPMKPKPVFGAGPGGDRRGPGAGPGAGPRPAR</sequence>
<proteinExistence type="inferred from homology"/>
<evidence type="ECO:0000255" key="1">
    <source>
        <dbReference type="HAMAP-Rule" id="MF_00358"/>
    </source>
</evidence>
<evidence type="ECO:0000256" key="2">
    <source>
        <dbReference type="SAM" id="MobiDB-lite"/>
    </source>
</evidence>
<evidence type="ECO:0000305" key="3"/>
<comment type="similarity">
    <text evidence="1">Belongs to the bacterial ribosomal protein bS21 family.</text>
</comment>
<reference key="1">
    <citation type="submission" date="2006-09" db="EMBL/GenBank/DDBJ databases">
        <title>Complete sequence of Rhodopseudomonas palustris BisA53.</title>
        <authorList>
            <consortium name="US DOE Joint Genome Institute"/>
            <person name="Copeland A."/>
            <person name="Lucas S."/>
            <person name="Lapidus A."/>
            <person name="Barry K."/>
            <person name="Detter J.C."/>
            <person name="Glavina del Rio T."/>
            <person name="Hammon N."/>
            <person name="Israni S."/>
            <person name="Dalin E."/>
            <person name="Tice H."/>
            <person name="Pitluck S."/>
            <person name="Chain P."/>
            <person name="Malfatti S."/>
            <person name="Shin M."/>
            <person name="Vergez L."/>
            <person name="Schmutz J."/>
            <person name="Larimer F."/>
            <person name="Land M."/>
            <person name="Hauser L."/>
            <person name="Pelletier D.A."/>
            <person name="Kyrpides N."/>
            <person name="Kim E."/>
            <person name="Harwood C.S."/>
            <person name="Oda Y."/>
            <person name="Richardson P."/>
        </authorList>
    </citation>
    <scope>NUCLEOTIDE SEQUENCE [LARGE SCALE GENOMIC DNA]</scope>
    <source>
        <strain>BisA53</strain>
    </source>
</reference>
<protein>
    <recommendedName>
        <fullName evidence="1">Small ribosomal subunit protein bS21</fullName>
    </recommendedName>
    <alternativeName>
        <fullName evidence="3">30S ribosomal protein S21</fullName>
    </alternativeName>
</protein>
<organism>
    <name type="scientific">Rhodopseudomonas palustris (strain BisA53)</name>
    <dbReference type="NCBI Taxonomy" id="316055"/>
    <lineage>
        <taxon>Bacteria</taxon>
        <taxon>Pseudomonadati</taxon>
        <taxon>Pseudomonadota</taxon>
        <taxon>Alphaproteobacteria</taxon>
        <taxon>Hyphomicrobiales</taxon>
        <taxon>Nitrobacteraceae</taxon>
        <taxon>Rhodopseudomonas</taxon>
    </lineage>
</organism>
<keyword id="KW-0687">Ribonucleoprotein</keyword>
<keyword id="KW-0689">Ribosomal protein</keyword>
<dbReference type="EMBL" id="CP000463">
    <property type="protein sequence ID" value="ABJ08017.1"/>
    <property type="molecule type" value="Genomic_DNA"/>
</dbReference>
<dbReference type="SMR" id="Q07J67"/>
<dbReference type="STRING" id="316055.RPE_4091"/>
<dbReference type="KEGG" id="rpe:RPE_4091"/>
<dbReference type="eggNOG" id="COG0828">
    <property type="taxonomic scope" value="Bacteria"/>
</dbReference>
<dbReference type="HOGENOM" id="CLU_159258_0_0_5"/>
<dbReference type="OrthoDB" id="9811907at2"/>
<dbReference type="GO" id="GO:1990904">
    <property type="term" value="C:ribonucleoprotein complex"/>
    <property type="evidence" value="ECO:0007669"/>
    <property type="project" value="UniProtKB-KW"/>
</dbReference>
<dbReference type="GO" id="GO:0005840">
    <property type="term" value="C:ribosome"/>
    <property type="evidence" value="ECO:0007669"/>
    <property type="project" value="UniProtKB-KW"/>
</dbReference>
<dbReference type="GO" id="GO:0003735">
    <property type="term" value="F:structural constituent of ribosome"/>
    <property type="evidence" value="ECO:0007669"/>
    <property type="project" value="InterPro"/>
</dbReference>
<dbReference type="GO" id="GO:0006412">
    <property type="term" value="P:translation"/>
    <property type="evidence" value="ECO:0007669"/>
    <property type="project" value="UniProtKB-UniRule"/>
</dbReference>
<dbReference type="Gene3D" id="1.20.5.1150">
    <property type="entry name" value="Ribosomal protein S8"/>
    <property type="match status" value="1"/>
</dbReference>
<dbReference type="HAMAP" id="MF_00358">
    <property type="entry name" value="Ribosomal_bS21"/>
    <property type="match status" value="1"/>
</dbReference>
<dbReference type="InterPro" id="IPR001911">
    <property type="entry name" value="Ribosomal_bS21"/>
</dbReference>
<dbReference type="InterPro" id="IPR018278">
    <property type="entry name" value="Ribosomal_bS21_CS"/>
</dbReference>
<dbReference type="InterPro" id="IPR038380">
    <property type="entry name" value="Ribosomal_bS21_sf"/>
</dbReference>
<dbReference type="NCBIfam" id="TIGR00030">
    <property type="entry name" value="S21p"/>
    <property type="match status" value="1"/>
</dbReference>
<dbReference type="PANTHER" id="PTHR21109">
    <property type="entry name" value="MITOCHONDRIAL 28S RIBOSOMAL PROTEIN S21"/>
    <property type="match status" value="1"/>
</dbReference>
<dbReference type="PANTHER" id="PTHR21109:SF0">
    <property type="entry name" value="SMALL RIBOSOMAL SUBUNIT PROTEIN BS21M"/>
    <property type="match status" value="1"/>
</dbReference>
<dbReference type="Pfam" id="PF01165">
    <property type="entry name" value="Ribosomal_S21"/>
    <property type="match status" value="1"/>
</dbReference>
<dbReference type="PROSITE" id="PS01181">
    <property type="entry name" value="RIBOSOMAL_S21"/>
    <property type="match status" value="1"/>
</dbReference>